<protein>
    <recommendedName>
        <fullName evidence="1">Probable potassium transport system protein Kup 2</fullName>
    </recommendedName>
</protein>
<sequence>MEKQNHSNESSDGHKSSPLFSSTTFLLALGSLGVVYGDIGTSPLYSIRECFHGTHAIALNEPNIFGVLSLVFWSMTMVICVKYVVFVMRADNHGMGGIFALLALIPGDSGRISPRLHGVVAFAATLGASLLYGDGVITPAISVLSAVEGLEVATEAAKPLVVPLTCVVLLALFLVQRRGTGVIGNVFGPIMIVWFVTIAALGAGKIVDRPDILLAVNPVYAFEFFAANRFVGVVVLGSVVLCITGGEALYADMGHFGRNPIRLSWLGLAFPALLLNYFGQGALLLSDPNFAFNPFYGLVPRTLLYPMVCLSTIATVIASQAMISGVFSLTQQAIQLGFCPRMRIIHTSRETRGQVYIPEVNYLLMIACLGLVLVFKKSSGLAGAYGIAVTADMALTSILFFFVITRTWKWSLARAVPLLVLFLFFDLSYFGANLFKIFDGGWITLTIAAIVATSMITWKDGRAALARKILSSRLPENLFLEDVARHNPPRVPGTAIFMSVSPMGIPVSLLHHYKHNQVLHEQVILLSITSTDTPTVPDRKKLHIVDLGQGFYRIIASYGFMETPNIPTIMRLASMQGIVTDPARTSYYLGRESLLTGGDSKMMQWRKALFVYMSRNAGTPTAYFDIPPDRVVELGLQIAI</sequence>
<dbReference type="EMBL" id="CP000478">
    <property type="protein sequence ID" value="ABK19244.1"/>
    <property type="molecule type" value="Genomic_DNA"/>
</dbReference>
<dbReference type="RefSeq" id="WP_011700369.1">
    <property type="nucleotide sequence ID" value="NC_008554.1"/>
</dbReference>
<dbReference type="FunCoup" id="A0LP92">
    <property type="interactions" value="78"/>
</dbReference>
<dbReference type="STRING" id="335543.Sfum_3574"/>
<dbReference type="KEGG" id="sfu:Sfum_3574"/>
<dbReference type="eggNOG" id="COG3158">
    <property type="taxonomic scope" value="Bacteria"/>
</dbReference>
<dbReference type="HOGENOM" id="CLU_008142_4_2_7"/>
<dbReference type="InParanoid" id="A0LP92"/>
<dbReference type="Proteomes" id="UP000001784">
    <property type="component" value="Chromosome"/>
</dbReference>
<dbReference type="GO" id="GO:0005886">
    <property type="term" value="C:plasma membrane"/>
    <property type="evidence" value="ECO:0007669"/>
    <property type="project" value="UniProtKB-SubCell"/>
</dbReference>
<dbReference type="GO" id="GO:0015079">
    <property type="term" value="F:potassium ion transmembrane transporter activity"/>
    <property type="evidence" value="ECO:0007669"/>
    <property type="project" value="UniProtKB-UniRule"/>
</dbReference>
<dbReference type="GO" id="GO:0015293">
    <property type="term" value="F:symporter activity"/>
    <property type="evidence" value="ECO:0007669"/>
    <property type="project" value="UniProtKB-UniRule"/>
</dbReference>
<dbReference type="HAMAP" id="MF_01522">
    <property type="entry name" value="Kup"/>
    <property type="match status" value="1"/>
</dbReference>
<dbReference type="InterPro" id="IPR003855">
    <property type="entry name" value="K+_transporter"/>
</dbReference>
<dbReference type="InterPro" id="IPR053952">
    <property type="entry name" value="K_trans_C"/>
</dbReference>
<dbReference type="InterPro" id="IPR053951">
    <property type="entry name" value="K_trans_N"/>
</dbReference>
<dbReference type="InterPro" id="IPR023051">
    <property type="entry name" value="Kup"/>
</dbReference>
<dbReference type="PANTHER" id="PTHR30540:SF79">
    <property type="entry name" value="LOW AFFINITY POTASSIUM TRANSPORT SYSTEM PROTEIN KUP"/>
    <property type="match status" value="1"/>
</dbReference>
<dbReference type="PANTHER" id="PTHR30540">
    <property type="entry name" value="OSMOTIC STRESS POTASSIUM TRANSPORTER"/>
    <property type="match status" value="1"/>
</dbReference>
<dbReference type="Pfam" id="PF02705">
    <property type="entry name" value="K_trans"/>
    <property type="match status" value="1"/>
</dbReference>
<dbReference type="Pfam" id="PF22776">
    <property type="entry name" value="K_trans_C"/>
    <property type="match status" value="1"/>
</dbReference>
<proteinExistence type="inferred from homology"/>
<keyword id="KW-0997">Cell inner membrane</keyword>
<keyword id="KW-1003">Cell membrane</keyword>
<keyword id="KW-0406">Ion transport</keyword>
<keyword id="KW-0472">Membrane</keyword>
<keyword id="KW-0630">Potassium</keyword>
<keyword id="KW-0633">Potassium transport</keyword>
<keyword id="KW-1185">Reference proteome</keyword>
<keyword id="KW-0769">Symport</keyword>
<keyword id="KW-0812">Transmembrane</keyword>
<keyword id="KW-1133">Transmembrane helix</keyword>
<keyword id="KW-0813">Transport</keyword>
<feature type="chain" id="PRO_0000279840" description="Probable potassium transport system protein Kup 2">
    <location>
        <begin position="1"/>
        <end position="640"/>
    </location>
</feature>
<feature type="transmembrane region" description="Helical" evidence="1">
    <location>
        <begin position="19"/>
        <end position="39"/>
    </location>
</feature>
<feature type="transmembrane region" description="Helical" evidence="1">
    <location>
        <begin position="67"/>
        <end position="87"/>
    </location>
</feature>
<feature type="transmembrane region" description="Helical" evidence="1">
    <location>
        <begin position="118"/>
        <end position="138"/>
    </location>
</feature>
<feature type="transmembrane region" description="Helical" evidence="1">
    <location>
        <begin position="155"/>
        <end position="175"/>
    </location>
</feature>
<feature type="transmembrane region" description="Helical" evidence="1">
    <location>
        <begin position="181"/>
        <end position="201"/>
    </location>
</feature>
<feature type="transmembrane region" description="Helical" evidence="1">
    <location>
        <begin position="230"/>
        <end position="250"/>
    </location>
</feature>
<feature type="transmembrane region" description="Helical" evidence="1">
    <location>
        <begin position="265"/>
        <end position="285"/>
    </location>
</feature>
<feature type="transmembrane region" description="Helical" evidence="1">
    <location>
        <begin position="307"/>
        <end position="327"/>
    </location>
</feature>
<feature type="transmembrane region" description="Helical" evidence="1">
    <location>
        <begin position="355"/>
        <end position="375"/>
    </location>
</feature>
<feature type="transmembrane region" description="Helical" evidence="1">
    <location>
        <begin position="384"/>
        <end position="404"/>
    </location>
</feature>
<feature type="transmembrane region" description="Helical" evidence="1">
    <location>
        <begin position="415"/>
        <end position="435"/>
    </location>
</feature>
<feature type="transmembrane region" description="Helical" evidence="1">
    <location>
        <begin position="437"/>
        <end position="457"/>
    </location>
</feature>
<accession>A0LP92</accession>
<evidence type="ECO:0000255" key="1">
    <source>
        <dbReference type="HAMAP-Rule" id="MF_01522"/>
    </source>
</evidence>
<reference key="1">
    <citation type="submission" date="2006-10" db="EMBL/GenBank/DDBJ databases">
        <title>Complete sequence of Syntrophobacter fumaroxidans MPOB.</title>
        <authorList>
            <consortium name="US DOE Joint Genome Institute"/>
            <person name="Copeland A."/>
            <person name="Lucas S."/>
            <person name="Lapidus A."/>
            <person name="Barry K."/>
            <person name="Detter J.C."/>
            <person name="Glavina del Rio T."/>
            <person name="Hammon N."/>
            <person name="Israni S."/>
            <person name="Pitluck S."/>
            <person name="Goltsman E.G."/>
            <person name="Martinez M."/>
            <person name="Schmutz J."/>
            <person name="Larimer F."/>
            <person name="Land M."/>
            <person name="Hauser L."/>
            <person name="Kyrpides N."/>
            <person name="Kim E."/>
            <person name="Boone D.R."/>
            <person name="Brockman F."/>
            <person name="Culley D."/>
            <person name="Ferry J."/>
            <person name="Gunsalus R."/>
            <person name="McInerney M.J."/>
            <person name="Morrison M."/>
            <person name="Plugge C."/>
            <person name="Rohlin L."/>
            <person name="Scholten J."/>
            <person name="Sieber J."/>
            <person name="Stams A.J.M."/>
            <person name="Worm P."/>
            <person name="Henstra A.M."/>
            <person name="Richardson P."/>
        </authorList>
    </citation>
    <scope>NUCLEOTIDE SEQUENCE [LARGE SCALE GENOMIC DNA]</scope>
    <source>
        <strain>DSM 10017 / MPOB</strain>
    </source>
</reference>
<gene>
    <name evidence="1" type="primary">kup2</name>
    <name type="ordered locus">Sfum_3574</name>
</gene>
<comment type="function">
    <text evidence="1">Transport of potassium into the cell. Likely operates as a K(+):H(+) symporter.</text>
</comment>
<comment type="catalytic activity">
    <reaction evidence="1">
        <text>K(+)(in) + H(+)(in) = K(+)(out) + H(+)(out)</text>
        <dbReference type="Rhea" id="RHEA:28490"/>
        <dbReference type="ChEBI" id="CHEBI:15378"/>
        <dbReference type="ChEBI" id="CHEBI:29103"/>
    </reaction>
    <physiologicalReaction direction="right-to-left" evidence="1">
        <dbReference type="Rhea" id="RHEA:28492"/>
    </physiologicalReaction>
</comment>
<comment type="subcellular location">
    <subcellularLocation>
        <location evidence="1">Cell inner membrane</location>
        <topology evidence="1">Multi-pass membrane protein</topology>
    </subcellularLocation>
</comment>
<comment type="similarity">
    <text evidence="1">Belongs to the HAK/KUP transporter (TC 2.A.72) family.</text>
</comment>
<organism>
    <name type="scientific">Syntrophobacter fumaroxidans (strain DSM 10017 / MPOB)</name>
    <dbReference type="NCBI Taxonomy" id="335543"/>
    <lineage>
        <taxon>Bacteria</taxon>
        <taxon>Pseudomonadati</taxon>
        <taxon>Thermodesulfobacteriota</taxon>
        <taxon>Syntrophobacteria</taxon>
        <taxon>Syntrophobacterales</taxon>
        <taxon>Syntrophobacteraceae</taxon>
        <taxon>Syntrophobacter</taxon>
    </lineage>
</organism>
<name>KUP2_SYNFM</name>